<evidence type="ECO:0000255" key="1">
    <source>
        <dbReference type="HAMAP-Rule" id="MF_00360"/>
    </source>
</evidence>
<evidence type="ECO:0000256" key="2">
    <source>
        <dbReference type="SAM" id="MobiDB-lite"/>
    </source>
</evidence>
<evidence type="ECO:0000305" key="3"/>
<feature type="chain" id="PRO_0000176771" description="Small ribosomal subunit protein bS6">
    <location>
        <begin position="1"/>
        <end position="117"/>
    </location>
</feature>
<feature type="region of interest" description="Disordered" evidence="2">
    <location>
        <begin position="96"/>
        <end position="117"/>
    </location>
</feature>
<feature type="compositionally biased region" description="Low complexity" evidence="2">
    <location>
        <begin position="99"/>
        <end position="117"/>
    </location>
</feature>
<reference key="1">
    <citation type="journal article" date="2003" name="Science">
        <title>Genome of Geobacter sulfurreducens: metal reduction in subsurface environments.</title>
        <authorList>
            <person name="Methe B.A."/>
            <person name="Nelson K.E."/>
            <person name="Eisen J.A."/>
            <person name="Paulsen I.T."/>
            <person name="Nelson W.C."/>
            <person name="Heidelberg J.F."/>
            <person name="Wu D."/>
            <person name="Wu M."/>
            <person name="Ward N.L."/>
            <person name="Beanan M.J."/>
            <person name="Dodson R.J."/>
            <person name="Madupu R."/>
            <person name="Brinkac L.M."/>
            <person name="Daugherty S.C."/>
            <person name="DeBoy R.T."/>
            <person name="Durkin A.S."/>
            <person name="Gwinn M.L."/>
            <person name="Kolonay J.F."/>
            <person name="Sullivan S.A."/>
            <person name="Haft D.H."/>
            <person name="Selengut J."/>
            <person name="Davidsen T.M."/>
            <person name="Zafar N."/>
            <person name="White O."/>
            <person name="Tran B."/>
            <person name="Romero C."/>
            <person name="Forberger H.A."/>
            <person name="Weidman J.F."/>
            <person name="Khouri H.M."/>
            <person name="Feldblyum T.V."/>
            <person name="Utterback T.R."/>
            <person name="Van Aken S.E."/>
            <person name="Lovley D.R."/>
            <person name="Fraser C.M."/>
        </authorList>
    </citation>
    <scope>NUCLEOTIDE SEQUENCE [LARGE SCALE GENOMIC DNA]</scope>
    <source>
        <strain>ATCC 51573 / DSM 12127 / PCA</strain>
    </source>
</reference>
<protein>
    <recommendedName>
        <fullName evidence="1">Small ribosomal subunit protein bS6</fullName>
    </recommendedName>
    <alternativeName>
        <fullName evidence="3">30S ribosomal protein S6</fullName>
    </alternativeName>
</protein>
<sequence>MVRMYETIVIVQPELGDDELKGLTAKVTDIIGSFKGVLHRLEDWGVRKLAYPVKKSVRGRYYYVRFDGDAPLIAELERRLRLDDKVLRYQSVKLEKEAAAPAPKAAPVESAPAVEAE</sequence>
<proteinExistence type="inferred from homology"/>
<keyword id="KW-1185">Reference proteome</keyword>
<keyword id="KW-0687">Ribonucleoprotein</keyword>
<keyword id="KW-0689">Ribosomal protein</keyword>
<keyword id="KW-0694">RNA-binding</keyword>
<keyword id="KW-0699">rRNA-binding</keyword>
<comment type="function">
    <text evidence="1">Binds together with bS18 to 16S ribosomal RNA.</text>
</comment>
<comment type="similarity">
    <text evidence="1">Belongs to the bacterial ribosomal protein bS6 family.</text>
</comment>
<accession>Q74FE4</accession>
<dbReference type="EMBL" id="AE017180">
    <property type="protein sequence ID" value="AAR33995.1"/>
    <property type="molecule type" value="Genomic_DNA"/>
</dbReference>
<dbReference type="RefSeq" id="NP_951722.1">
    <property type="nucleotide sequence ID" value="NC_002939.5"/>
</dbReference>
<dbReference type="RefSeq" id="WP_010941326.1">
    <property type="nucleotide sequence ID" value="NC_002939.5"/>
</dbReference>
<dbReference type="SMR" id="Q74FE4"/>
<dbReference type="FunCoup" id="Q74FE4">
    <property type="interactions" value="600"/>
</dbReference>
<dbReference type="STRING" id="243231.GSU0665"/>
<dbReference type="EnsemblBacteria" id="AAR33995">
    <property type="protein sequence ID" value="AAR33995"/>
    <property type="gene ID" value="GSU0665"/>
</dbReference>
<dbReference type="KEGG" id="gsu:GSU0665"/>
<dbReference type="PATRIC" id="fig|243231.5.peg.661"/>
<dbReference type="eggNOG" id="COG0360">
    <property type="taxonomic scope" value="Bacteria"/>
</dbReference>
<dbReference type="HOGENOM" id="CLU_113441_4_3_7"/>
<dbReference type="InParanoid" id="Q74FE4"/>
<dbReference type="OrthoDB" id="9812702at2"/>
<dbReference type="Proteomes" id="UP000000577">
    <property type="component" value="Chromosome"/>
</dbReference>
<dbReference type="GO" id="GO:0022627">
    <property type="term" value="C:cytosolic small ribosomal subunit"/>
    <property type="evidence" value="ECO:0000318"/>
    <property type="project" value="GO_Central"/>
</dbReference>
<dbReference type="GO" id="GO:0070181">
    <property type="term" value="F:small ribosomal subunit rRNA binding"/>
    <property type="evidence" value="ECO:0000318"/>
    <property type="project" value="GO_Central"/>
</dbReference>
<dbReference type="GO" id="GO:0003735">
    <property type="term" value="F:structural constituent of ribosome"/>
    <property type="evidence" value="ECO:0000318"/>
    <property type="project" value="GO_Central"/>
</dbReference>
<dbReference type="GO" id="GO:0006412">
    <property type="term" value="P:translation"/>
    <property type="evidence" value="ECO:0007669"/>
    <property type="project" value="UniProtKB-UniRule"/>
</dbReference>
<dbReference type="CDD" id="cd00473">
    <property type="entry name" value="bS6"/>
    <property type="match status" value="1"/>
</dbReference>
<dbReference type="Gene3D" id="3.30.70.60">
    <property type="match status" value="1"/>
</dbReference>
<dbReference type="HAMAP" id="MF_00360">
    <property type="entry name" value="Ribosomal_bS6"/>
    <property type="match status" value="1"/>
</dbReference>
<dbReference type="InterPro" id="IPR000529">
    <property type="entry name" value="Ribosomal_bS6"/>
</dbReference>
<dbReference type="InterPro" id="IPR035980">
    <property type="entry name" value="Ribosomal_bS6_sf"/>
</dbReference>
<dbReference type="InterPro" id="IPR020814">
    <property type="entry name" value="Ribosomal_S6_plastid/chlpt"/>
</dbReference>
<dbReference type="InterPro" id="IPR014717">
    <property type="entry name" value="Transl_elong_EF1B/ribsomal_bS6"/>
</dbReference>
<dbReference type="NCBIfam" id="TIGR00166">
    <property type="entry name" value="S6"/>
    <property type="match status" value="1"/>
</dbReference>
<dbReference type="PANTHER" id="PTHR21011">
    <property type="entry name" value="MITOCHONDRIAL 28S RIBOSOMAL PROTEIN S6"/>
    <property type="match status" value="1"/>
</dbReference>
<dbReference type="PANTHER" id="PTHR21011:SF1">
    <property type="entry name" value="SMALL RIBOSOMAL SUBUNIT PROTEIN BS6M"/>
    <property type="match status" value="1"/>
</dbReference>
<dbReference type="Pfam" id="PF01250">
    <property type="entry name" value="Ribosomal_S6"/>
    <property type="match status" value="1"/>
</dbReference>
<dbReference type="SUPFAM" id="SSF54995">
    <property type="entry name" value="Ribosomal protein S6"/>
    <property type="match status" value="1"/>
</dbReference>
<gene>
    <name evidence="1" type="primary">rpsF</name>
    <name type="ordered locus">GSU0665</name>
</gene>
<organism>
    <name type="scientific">Geobacter sulfurreducens (strain ATCC 51573 / DSM 12127 / PCA)</name>
    <dbReference type="NCBI Taxonomy" id="243231"/>
    <lineage>
        <taxon>Bacteria</taxon>
        <taxon>Pseudomonadati</taxon>
        <taxon>Thermodesulfobacteriota</taxon>
        <taxon>Desulfuromonadia</taxon>
        <taxon>Geobacterales</taxon>
        <taxon>Geobacteraceae</taxon>
        <taxon>Geobacter</taxon>
    </lineage>
</organism>
<name>RS6_GEOSL</name>